<protein>
    <recommendedName>
        <fullName evidence="1">Argininosuccinate synthase</fullName>
        <ecNumber evidence="1">6.3.4.5</ecNumber>
    </recommendedName>
    <alternativeName>
        <fullName evidence="1">Citrulline--aspartate ligase</fullName>
    </alternativeName>
</protein>
<organism>
    <name type="scientific">Clostridium botulinum (strain ATCC 19397 / Type A)</name>
    <dbReference type="NCBI Taxonomy" id="441770"/>
    <lineage>
        <taxon>Bacteria</taxon>
        <taxon>Bacillati</taxon>
        <taxon>Bacillota</taxon>
        <taxon>Clostridia</taxon>
        <taxon>Eubacteriales</taxon>
        <taxon>Clostridiaceae</taxon>
        <taxon>Clostridium</taxon>
    </lineage>
</organism>
<sequence>MKEKVVLAYSGGLDTSIIIPWLKENYDLDVIAVCVNVGQGDDMDYVKTKAIKSGASKIYVEDVKEEFVVDYLYKAIKSEALYEQDYMLGTSFARPLMAKKLVEIAHKEQAKYICHGCTGKGNDQVRFEVGVKAQDPTIKIIAPWRIWDIKSREDAIDYAKKVGVEVPVTKKKIYSVDKNLWHVSHEGGDLEDLKNEHKEDMYFMVTPPEKAKDEPTYLEIYFEKGAPVKINGEVLNPVDIIDKLNTIGGENGIGIADIIENRLVGMKSRGIYETPAGTLLYAAHKKLESVTLDKYTYQYKKIVSAQYGELVYNGLWFTSLREAIDAFVDKTQENVTGTVQLKLYKGNIKPCSVDTEYALYDEGISSFGESELYSHKDAEGFINLFGLPSKIKALKNF</sequence>
<reference key="1">
    <citation type="journal article" date="2007" name="PLoS ONE">
        <title>Analysis of the neurotoxin complex genes in Clostridium botulinum A1-A4 and B1 strains: BoNT/A3, /Ba4 and /B1 clusters are located within plasmids.</title>
        <authorList>
            <person name="Smith T.J."/>
            <person name="Hill K.K."/>
            <person name="Foley B.T."/>
            <person name="Detter J.C."/>
            <person name="Munk A.C."/>
            <person name="Bruce D.C."/>
            <person name="Doggett N.A."/>
            <person name="Smith L.A."/>
            <person name="Marks J.D."/>
            <person name="Xie G."/>
            <person name="Brettin T.S."/>
        </authorList>
    </citation>
    <scope>NUCLEOTIDE SEQUENCE [LARGE SCALE GENOMIC DNA]</scope>
    <source>
        <strain>ATCC 19397 / Type A</strain>
    </source>
</reference>
<feature type="chain" id="PRO_0000321306" description="Argininosuccinate synthase">
    <location>
        <begin position="1"/>
        <end position="397"/>
    </location>
</feature>
<feature type="binding site" evidence="1">
    <location>
        <begin position="8"/>
        <end position="16"/>
    </location>
    <ligand>
        <name>ATP</name>
        <dbReference type="ChEBI" id="CHEBI:30616"/>
    </ligand>
</feature>
<feature type="binding site" evidence="1">
    <location>
        <position position="86"/>
    </location>
    <ligand>
        <name>L-citrulline</name>
        <dbReference type="ChEBI" id="CHEBI:57743"/>
    </ligand>
</feature>
<feature type="binding site" evidence="1">
    <location>
        <position position="91"/>
    </location>
    <ligand>
        <name>L-citrulline</name>
        <dbReference type="ChEBI" id="CHEBI:57743"/>
    </ligand>
</feature>
<feature type="binding site" evidence="1">
    <location>
        <position position="116"/>
    </location>
    <ligand>
        <name>ATP</name>
        <dbReference type="ChEBI" id="CHEBI:30616"/>
    </ligand>
</feature>
<feature type="binding site" evidence="1">
    <location>
        <position position="118"/>
    </location>
    <ligand>
        <name>L-aspartate</name>
        <dbReference type="ChEBI" id="CHEBI:29991"/>
    </ligand>
</feature>
<feature type="binding site" evidence="1">
    <location>
        <position position="122"/>
    </location>
    <ligand>
        <name>L-aspartate</name>
        <dbReference type="ChEBI" id="CHEBI:29991"/>
    </ligand>
</feature>
<feature type="binding site" evidence="1">
    <location>
        <position position="122"/>
    </location>
    <ligand>
        <name>L-citrulline</name>
        <dbReference type="ChEBI" id="CHEBI:57743"/>
    </ligand>
</feature>
<feature type="binding site" evidence="1">
    <location>
        <position position="123"/>
    </location>
    <ligand>
        <name>L-aspartate</name>
        <dbReference type="ChEBI" id="CHEBI:29991"/>
    </ligand>
</feature>
<feature type="binding site" evidence="1">
    <location>
        <position position="126"/>
    </location>
    <ligand>
        <name>L-citrulline</name>
        <dbReference type="ChEBI" id="CHEBI:57743"/>
    </ligand>
</feature>
<feature type="binding site" evidence="1">
    <location>
        <position position="175"/>
    </location>
    <ligand>
        <name>L-citrulline</name>
        <dbReference type="ChEBI" id="CHEBI:57743"/>
    </ligand>
</feature>
<feature type="binding site" evidence="1">
    <location>
        <position position="184"/>
    </location>
    <ligand>
        <name>L-citrulline</name>
        <dbReference type="ChEBI" id="CHEBI:57743"/>
    </ligand>
</feature>
<feature type="binding site" evidence="1">
    <location>
        <position position="260"/>
    </location>
    <ligand>
        <name>L-citrulline</name>
        <dbReference type="ChEBI" id="CHEBI:57743"/>
    </ligand>
</feature>
<feature type="binding site" evidence="1">
    <location>
        <position position="272"/>
    </location>
    <ligand>
        <name>L-citrulline</name>
        <dbReference type="ChEBI" id="CHEBI:57743"/>
    </ligand>
</feature>
<accession>A7FWU6</accession>
<gene>
    <name evidence="1" type="primary">argG</name>
    <name type="ordered locus">CLB_2612</name>
</gene>
<name>ASSY_CLOB1</name>
<evidence type="ECO:0000255" key="1">
    <source>
        <dbReference type="HAMAP-Rule" id="MF_00005"/>
    </source>
</evidence>
<keyword id="KW-0028">Amino-acid biosynthesis</keyword>
<keyword id="KW-0055">Arginine biosynthesis</keyword>
<keyword id="KW-0067">ATP-binding</keyword>
<keyword id="KW-0963">Cytoplasm</keyword>
<keyword id="KW-0436">Ligase</keyword>
<keyword id="KW-0547">Nucleotide-binding</keyword>
<proteinExistence type="inferred from homology"/>
<comment type="catalytic activity">
    <reaction evidence="1">
        <text>L-citrulline + L-aspartate + ATP = 2-(N(omega)-L-arginino)succinate + AMP + diphosphate + H(+)</text>
        <dbReference type="Rhea" id="RHEA:10932"/>
        <dbReference type="ChEBI" id="CHEBI:15378"/>
        <dbReference type="ChEBI" id="CHEBI:29991"/>
        <dbReference type="ChEBI" id="CHEBI:30616"/>
        <dbReference type="ChEBI" id="CHEBI:33019"/>
        <dbReference type="ChEBI" id="CHEBI:57472"/>
        <dbReference type="ChEBI" id="CHEBI:57743"/>
        <dbReference type="ChEBI" id="CHEBI:456215"/>
        <dbReference type="EC" id="6.3.4.5"/>
    </reaction>
</comment>
<comment type="pathway">
    <text evidence="1">Amino-acid biosynthesis; L-arginine biosynthesis; L-arginine from L-ornithine and carbamoyl phosphate: step 2/3.</text>
</comment>
<comment type="subunit">
    <text evidence="1">Homotetramer.</text>
</comment>
<comment type="subcellular location">
    <subcellularLocation>
        <location evidence="1">Cytoplasm</location>
    </subcellularLocation>
</comment>
<comment type="similarity">
    <text evidence="1">Belongs to the argininosuccinate synthase family. Type 1 subfamily.</text>
</comment>
<dbReference type="EC" id="6.3.4.5" evidence="1"/>
<dbReference type="EMBL" id="CP000726">
    <property type="protein sequence ID" value="ABS33282.1"/>
    <property type="molecule type" value="Genomic_DNA"/>
</dbReference>
<dbReference type="RefSeq" id="WP_011986966.1">
    <property type="nucleotide sequence ID" value="NC_009697.1"/>
</dbReference>
<dbReference type="SMR" id="A7FWU6"/>
<dbReference type="KEGG" id="cba:CLB_2612"/>
<dbReference type="HOGENOM" id="CLU_032784_4_2_9"/>
<dbReference type="UniPathway" id="UPA00068">
    <property type="reaction ID" value="UER00113"/>
</dbReference>
<dbReference type="GO" id="GO:0005737">
    <property type="term" value="C:cytoplasm"/>
    <property type="evidence" value="ECO:0007669"/>
    <property type="project" value="UniProtKB-SubCell"/>
</dbReference>
<dbReference type="GO" id="GO:0004055">
    <property type="term" value="F:argininosuccinate synthase activity"/>
    <property type="evidence" value="ECO:0007669"/>
    <property type="project" value="UniProtKB-UniRule"/>
</dbReference>
<dbReference type="GO" id="GO:0005524">
    <property type="term" value="F:ATP binding"/>
    <property type="evidence" value="ECO:0007669"/>
    <property type="project" value="UniProtKB-UniRule"/>
</dbReference>
<dbReference type="GO" id="GO:0000053">
    <property type="term" value="P:argininosuccinate metabolic process"/>
    <property type="evidence" value="ECO:0007669"/>
    <property type="project" value="TreeGrafter"/>
</dbReference>
<dbReference type="GO" id="GO:0006526">
    <property type="term" value="P:L-arginine biosynthetic process"/>
    <property type="evidence" value="ECO:0007669"/>
    <property type="project" value="UniProtKB-UniRule"/>
</dbReference>
<dbReference type="GO" id="GO:0000050">
    <property type="term" value="P:urea cycle"/>
    <property type="evidence" value="ECO:0007669"/>
    <property type="project" value="TreeGrafter"/>
</dbReference>
<dbReference type="CDD" id="cd01999">
    <property type="entry name" value="ASS"/>
    <property type="match status" value="1"/>
</dbReference>
<dbReference type="FunFam" id="3.40.50.620:FF:000019">
    <property type="entry name" value="Argininosuccinate synthase"/>
    <property type="match status" value="1"/>
</dbReference>
<dbReference type="FunFam" id="3.90.1260.10:FF:000007">
    <property type="entry name" value="Argininosuccinate synthase"/>
    <property type="match status" value="1"/>
</dbReference>
<dbReference type="Gene3D" id="3.90.1260.10">
    <property type="entry name" value="Argininosuccinate synthetase, chain A, domain 2"/>
    <property type="match status" value="1"/>
</dbReference>
<dbReference type="Gene3D" id="3.40.50.620">
    <property type="entry name" value="HUPs"/>
    <property type="match status" value="1"/>
</dbReference>
<dbReference type="Gene3D" id="1.20.5.470">
    <property type="entry name" value="Single helix bin"/>
    <property type="match status" value="1"/>
</dbReference>
<dbReference type="HAMAP" id="MF_00005">
    <property type="entry name" value="Arg_succ_synth_type1"/>
    <property type="match status" value="1"/>
</dbReference>
<dbReference type="InterPro" id="IPR048268">
    <property type="entry name" value="Arginosuc_syn_C"/>
</dbReference>
<dbReference type="InterPro" id="IPR048267">
    <property type="entry name" value="Arginosuc_syn_N"/>
</dbReference>
<dbReference type="InterPro" id="IPR001518">
    <property type="entry name" value="Arginosuc_synth"/>
</dbReference>
<dbReference type="InterPro" id="IPR018223">
    <property type="entry name" value="Arginosuc_synth_CS"/>
</dbReference>
<dbReference type="InterPro" id="IPR023434">
    <property type="entry name" value="Arginosuc_synth_type_1_subfam"/>
</dbReference>
<dbReference type="InterPro" id="IPR024074">
    <property type="entry name" value="AS_cat/multimer_dom_body"/>
</dbReference>
<dbReference type="InterPro" id="IPR014729">
    <property type="entry name" value="Rossmann-like_a/b/a_fold"/>
</dbReference>
<dbReference type="NCBIfam" id="TIGR00032">
    <property type="entry name" value="argG"/>
    <property type="match status" value="1"/>
</dbReference>
<dbReference type="NCBIfam" id="NF001770">
    <property type="entry name" value="PRK00509.1"/>
    <property type="match status" value="1"/>
</dbReference>
<dbReference type="PANTHER" id="PTHR11587">
    <property type="entry name" value="ARGININOSUCCINATE SYNTHASE"/>
    <property type="match status" value="1"/>
</dbReference>
<dbReference type="PANTHER" id="PTHR11587:SF2">
    <property type="entry name" value="ARGININOSUCCINATE SYNTHASE"/>
    <property type="match status" value="1"/>
</dbReference>
<dbReference type="Pfam" id="PF20979">
    <property type="entry name" value="Arginosuc_syn_C"/>
    <property type="match status" value="1"/>
</dbReference>
<dbReference type="Pfam" id="PF00764">
    <property type="entry name" value="Arginosuc_synth"/>
    <property type="match status" value="1"/>
</dbReference>
<dbReference type="SUPFAM" id="SSF52402">
    <property type="entry name" value="Adenine nucleotide alpha hydrolases-like"/>
    <property type="match status" value="1"/>
</dbReference>
<dbReference type="SUPFAM" id="SSF69864">
    <property type="entry name" value="Argininosuccinate synthetase, C-terminal domain"/>
    <property type="match status" value="1"/>
</dbReference>
<dbReference type="PROSITE" id="PS00564">
    <property type="entry name" value="ARGININOSUCCIN_SYN_1"/>
    <property type="match status" value="1"/>
</dbReference>
<dbReference type="PROSITE" id="PS00565">
    <property type="entry name" value="ARGININOSUCCIN_SYN_2"/>
    <property type="match status" value="1"/>
</dbReference>